<protein>
    <recommendedName>
        <fullName evidence="1">RING finger protein Z</fullName>
        <shortName evidence="1">Protein Z</shortName>
    </recommendedName>
    <alternativeName>
        <fullName evidence="1">Zinc-binding protein</fullName>
    </alternativeName>
</protein>
<evidence type="ECO:0000255" key="1">
    <source>
        <dbReference type="HAMAP-Rule" id="MF_04087"/>
    </source>
</evidence>
<evidence type="ECO:0000269" key="2">
    <source>
    </source>
</evidence>
<evidence type="ECO:0000269" key="3">
    <source>
    </source>
</evidence>
<evidence type="ECO:0000269" key="4">
    <source>
    </source>
</evidence>
<evidence type="ECO:0000269" key="5">
    <source>
    </source>
</evidence>
<evidence type="ECO:0000269" key="6">
    <source>
    </source>
</evidence>
<evidence type="ECO:0000269" key="7">
    <source>
    </source>
</evidence>
<evidence type="ECO:0000269" key="8">
    <source>
    </source>
</evidence>
<evidence type="ECO:0000269" key="9">
    <source>
    </source>
</evidence>
<evidence type="ECO:0000269" key="10">
    <source>
    </source>
</evidence>
<evidence type="ECO:0007744" key="11">
    <source>
        <dbReference type="PDB" id="7X6V"/>
    </source>
</evidence>
<proteinExistence type="evidence at protein level"/>
<organismHost>
    <name type="scientific">Homo sapiens</name>
    <name type="common">Human</name>
    <dbReference type="NCBI Taxonomy" id="9606"/>
</organismHost>
<organismHost>
    <name type="scientific">Mesocricetus auratus</name>
    <name type="common">Golden hamster</name>
    <dbReference type="NCBI Taxonomy" id="10036"/>
</organismHost>
<organismHost>
    <name type="scientific">Mus musculus</name>
    <name type="common">Mouse</name>
    <dbReference type="NCBI Taxonomy" id="10090"/>
</organismHost>
<reference key="1">
    <citation type="journal article" date="1989" name="Virology">
        <title>The completed sequence of lymphocytic choriomeningitis virus reveals a unique RNA structure and a gene for a zinc finger protein.</title>
        <authorList>
            <person name="Salvato M.S."/>
            <person name="Shimomaye E.M."/>
        </authorList>
    </citation>
    <scope>NUCLEOTIDE SEQUENCE [GENOMIC RNA]</scope>
</reference>
<reference key="2">
    <citation type="journal article" date="2005" name="J. Virol.">
        <title>Mutagenesis-induced, large fitness variations with an invariant arenavirus consensus genomic nucleotide sequence.</title>
        <authorList>
            <person name="Grande-Perez A."/>
            <person name="Gomez-Mariano G."/>
            <person name="Lowenstein P.R."/>
            <person name="Domingo E."/>
        </authorList>
    </citation>
    <scope>NUCLEOTIDE SEQUENCE [GENOMIC RNA]</scope>
    <source>
        <strain>Isolate Armstrong 53b</strain>
    </source>
</reference>
<reference key="3">
    <citation type="journal article" date="2006" name="Proc. Natl. Acad. Sci. U.S.A.">
        <title>Recovery of an arenavirus entirely from RNA polymerase I/II-driven cDNA.</title>
        <authorList>
            <person name="Flatz L."/>
            <person name="Bergthaler A."/>
            <person name="de la Torre J.C."/>
            <person name="Pinschewer D.D."/>
        </authorList>
    </citation>
    <scope>NUCLEOTIDE SEQUENCE [GENOMIC RNA]</scope>
    <source>
        <strain>Isolate Armstrong-derived variant Cl13</strain>
    </source>
</reference>
<reference key="4">
    <citation type="journal article" date="1998" name="J. Virol.">
        <title>Two RING finger proteins, the oncoprotein PML and the arenavirus Z protein, colocalize with the nuclear fraction of the ribosomal P proteins.</title>
        <authorList>
            <person name="Borden K.L."/>
            <person name="Campbell-Dwyer E.J."/>
            <person name="Carlile G.W."/>
            <person name="Djavani M."/>
            <person name="Salvato M.S."/>
        </authorList>
    </citation>
    <scope>INTERACTION WITH HOST RPLP0 AND HOST PML</scope>
</reference>
<reference key="5">
    <citation type="journal article" date="2000" name="J. Virol.">
        <title>The lymphocytic choriomeningitis virus RING protein Z associates with eukaryotic initiation factor 4E and selectively represses translation in a RING-dependent manner.</title>
        <authorList>
            <person name="Campbell-Dwyer E.J."/>
            <person name="Lai H."/>
            <person name="MacDonald R.C."/>
            <person name="Salvato M.S."/>
            <person name="Borden K.L."/>
        </authorList>
    </citation>
    <scope>FUNCTION</scope>
    <scope>INTERACTION WITH HOST EIF4E</scope>
</reference>
<reference key="6">
    <citation type="journal article" date="2001" name="J. Mol. Biol.">
        <title>The RING domains of the promyelocytic leukemia protein PML and the arenaviral protein Z repress translation by directly inhibiting translation initiation factor eIF4E.</title>
        <authorList>
            <person name="Kentsis A."/>
            <person name="Dwyer E.C."/>
            <person name="Perez J.M."/>
            <person name="Sharma M."/>
            <person name="Chen A."/>
            <person name="Pan Z.Q."/>
            <person name="Borden K.L."/>
        </authorList>
    </citation>
    <scope>FUNCTION</scope>
    <scope>INTERACTION WITH HOST EIF4E</scope>
</reference>
<reference key="7">
    <citation type="journal article" date="2001" name="J. Virol.">
        <title>RING finger Z protein of lymphocytic choriomeningitis virus (LCMV) inhibits transcription and RNA replication of an LCMV S-segment minigenome.</title>
        <authorList>
            <person name="Cornu T.I."/>
            <person name="de la Torre J.C."/>
        </authorList>
    </citation>
    <scope>MUTAGENESIS OF CYS-32 AND CYS-35</scope>
    <scope>FUNCTION</scope>
</reference>
<reference key="8">
    <citation type="journal article" date="2002" name="J. Virol.">
        <title>Characterization of the arenavirus RING finger Z protein regions required for Z-mediated inhibition of viral RNA synthesis.</title>
        <authorList>
            <person name="Cornu T.I."/>
            <person name="de la Torre J.C."/>
        </authorList>
    </citation>
    <scope>FUNCTION</scope>
</reference>
<reference key="9">
    <citation type="journal article" date="2004" name="J. Virol.">
        <title>Myristoylation of the RING finger Z protein is essential for arenavirus budding.</title>
        <authorList>
            <person name="Perez M."/>
            <person name="Greenwald D.L."/>
            <person name="de la Torre J.C."/>
        </authorList>
    </citation>
    <scope>MYRISTOYLATION AT GLY-2</scope>
    <scope>MUTAGENESIS OF GLY-2</scope>
</reference>
<reference key="10">
    <citation type="journal article" date="2007" name="J. Virol.">
        <title>Arenavirus Z-glycoprotein association requires Z myristoylation but not functional RING or late domains.</title>
        <authorList>
            <person name="Capul A.A."/>
            <person name="Perez M."/>
            <person name="Burke E."/>
            <person name="Kunz S."/>
            <person name="Buchmeier M.J."/>
            <person name="de la Torre J.C."/>
        </authorList>
    </citation>
    <scope>INTERACTION WITH GLYCOPROTEIN COMPLEX GPC</scope>
</reference>
<reference key="11">
    <citation type="journal article" date="2024" name="Viruses">
        <title>Cellular N-Myristoyl Transferases Are Required for Mammarenavirus Multiplication.</title>
        <authorList>
            <person name="Witwit H."/>
            <person name="Betancourt C.A."/>
            <person name="Cubitt B."/>
            <person name="Khafaji R."/>
            <person name="Kowalski H."/>
            <person name="Jackson N."/>
            <person name="Ye C."/>
            <person name="Martinez-Sobrido L."/>
            <person name="de la Torre J.C."/>
        </authorList>
    </citation>
    <scope>MYRISTOYLATION</scope>
    <scope>FUNCTION</scope>
    <scope>MUTAGENESIS OF GLY-2</scope>
</reference>
<reference evidence="11" key="12">
    <citation type="journal article" date="2023" name="Protein Cell">
        <title>Structure basis for allosteric regulation of lymphocytic choriomeningitis virus polymerase function by Z matrix protein.</title>
        <authorList>
            <person name="Liu L."/>
            <person name="Wang P."/>
            <person name="Liu A."/>
            <person name="Zhang L."/>
            <person name="Yan L."/>
            <person name="Guo Y."/>
            <person name="Xiao G."/>
            <person name="Rao Z."/>
            <person name="Lou Z."/>
        </authorList>
    </citation>
    <scope>STRUCTURE BY ELECTRON MICROSCOPY (3.60 ANGSTROMS)</scope>
    <scope>INTERACTION WITH L POLYMERASE</scope>
    <scope>FUNCTION</scope>
</reference>
<dbReference type="EMBL" id="M27693">
    <property type="protein sequence ID" value="AAA46268.1"/>
    <property type="molecule type" value="Genomic_RNA"/>
</dbReference>
<dbReference type="EMBL" id="AY847351">
    <property type="protein sequence ID" value="AAX49343.1"/>
    <property type="molecule type" value="Genomic_RNA"/>
</dbReference>
<dbReference type="EMBL" id="DQ361066">
    <property type="protein sequence ID" value="ABC96003.1"/>
    <property type="molecule type" value="Genomic_RNA"/>
</dbReference>
<dbReference type="PIR" id="A32592">
    <property type="entry name" value="ZNXPLC"/>
</dbReference>
<dbReference type="PDB" id="7X6V">
    <property type="method" value="EM"/>
    <property type="resolution" value="3.60 A"/>
    <property type="chains" value="B=1-90"/>
</dbReference>
<dbReference type="PDBsum" id="7X6V"/>
<dbReference type="EMDB" id="EMD-33028"/>
<dbReference type="SMR" id="P18541"/>
<dbReference type="DIP" id="DIP-59720N"/>
<dbReference type="ELM" id="P18541"/>
<dbReference type="IntAct" id="P18541">
    <property type="interactions" value="1"/>
</dbReference>
<dbReference type="iPTMnet" id="P18541"/>
<dbReference type="Proteomes" id="UP000002474">
    <property type="component" value="Genome"/>
</dbReference>
<dbReference type="Proteomes" id="UP000121528">
    <property type="component" value="Genome"/>
</dbReference>
<dbReference type="GO" id="GO:0044220">
    <property type="term" value="C:host cell perinuclear region of cytoplasm"/>
    <property type="evidence" value="ECO:0007669"/>
    <property type="project" value="UniProtKB-SubCell"/>
</dbReference>
<dbReference type="GO" id="GO:0020002">
    <property type="term" value="C:host cell plasma membrane"/>
    <property type="evidence" value="ECO:0007669"/>
    <property type="project" value="UniProtKB-SubCell"/>
</dbReference>
<dbReference type="GO" id="GO:0016020">
    <property type="term" value="C:membrane"/>
    <property type="evidence" value="ECO:0007669"/>
    <property type="project" value="UniProtKB-UniRule"/>
</dbReference>
<dbReference type="GO" id="GO:0044423">
    <property type="term" value="C:virion component"/>
    <property type="evidence" value="ECO:0007669"/>
    <property type="project" value="UniProtKB-UniRule"/>
</dbReference>
<dbReference type="GO" id="GO:0003723">
    <property type="term" value="F:RNA binding"/>
    <property type="evidence" value="ECO:0007669"/>
    <property type="project" value="UniProtKB-UniRule"/>
</dbReference>
<dbReference type="GO" id="GO:0008270">
    <property type="term" value="F:zinc ion binding"/>
    <property type="evidence" value="ECO:0007669"/>
    <property type="project" value="UniProtKB-UniRule"/>
</dbReference>
<dbReference type="GO" id="GO:0046761">
    <property type="term" value="P:viral budding from plasma membrane"/>
    <property type="evidence" value="ECO:0000314"/>
    <property type="project" value="UniProtKB"/>
</dbReference>
<dbReference type="GO" id="GO:0039702">
    <property type="term" value="P:viral budding via host ESCRT complex"/>
    <property type="evidence" value="ECO:0007669"/>
    <property type="project" value="UniProtKB-UniRule"/>
</dbReference>
<dbReference type="Gene3D" id="3.30.160.310">
    <property type="match status" value="1"/>
</dbReference>
<dbReference type="HAMAP" id="MF_04087">
    <property type="entry name" value="ARENA_Z"/>
    <property type="match status" value="1"/>
</dbReference>
<dbReference type="InterPro" id="IPR024183">
    <property type="entry name" value="RING_finger_Z_arenaviridae"/>
</dbReference>
<dbReference type="InterPro" id="IPR038485">
    <property type="entry name" value="Z_RING-type_Znf_sf"/>
</dbReference>
<dbReference type="InterPro" id="IPR003224">
    <property type="entry name" value="Z_RING_Znf"/>
</dbReference>
<dbReference type="Pfam" id="PF03854">
    <property type="entry name" value="zf-P11"/>
    <property type="match status" value="1"/>
</dbReference>
<dbReference type="PIRSF" id="PIRSF004030">
    <property type="entry name" value="Z_ArenaV"/>
    <property type="match status" value="1"/>
</dbReference>
<dbReference type="SUPFAM" id="SSF57850">
    <property type="entry name" value="RING/U-box"/>
    <property type="match status" value="1"/>
</dbReference>
<comment type="function">
    <text evidence="1 2 3 4 5 8 9">Plays a crucial role in virion assembly and budding (PubMed:10708446, PubMed:11575918, PubMed:39339839). Expressed late in the virus life cycle, it acts as an inhibitor of viral transcription and RNA synthesis by interacting with the viral polymerase L (PubMed:12050381, PubMed:37038286). Presumably recruits the NP encapsidated genome to cellular membranes at budding sites via direct interaction with NP. Plays critical roles in the final steps of viral release by interacting with host TSG101, a member of the vacuolar protein-sorting pathway and using other cellular host proteins involved in vesicle formation pathway. The budding of the virus progeny occurs after association of protein Z with the viral glycoprotein complex SSP-GP1-GP2 at the cell periphery, step that requires myristoylation of protein Z (PubMed:39339839). Also selectively represses protein production by associating with host EIF4E (By similarity) (PubMed:10708446, PubMed:11575918). In cell-based minigenome assay, has an inhibitory effect on the ribonucleoprotein machinery (vRNP), which is responsible for the replication and transcription of the viral genome (PubMed:11533204, PubMed:39339839).</text>
</comment>
<comment type="subunit">
    <text evidence="1 2 4 7 8 10">Interacts with protein NP; this interaction probably directs the encapsidated genome to budding sites. Interacts (via RING-type zinc finger) with polymerase L; this interaction inhibits viral transcription and replication, Z partially blocks the product exit tunnel for the releasing nascent RNA product (PubMed:37038286). Interacts with the glycoprotein complex; this interaction plays a role in virion budding (PubMed:17581989). Interacts (via RING-type zinc finger) with host EIF4E; this interaction results in conformational changes of both interacting proteins and reduces EIF4E affinity for its substrate, the 5'-m7 G cap structure (PubMed:10708446, PubMed:11575918). Interacts (via late-budding domain) with host TSG101; this interaction is essential for budding and release of viral particles. Interacts with host RPLP0; this interaction may serve to load ribosome-like particles inside the virion. Interacts with host PML; this interaction induces PML bodies redistribution in the cytoplasm upon viral infection (By similarity) (PubMed:9557665).</text>
</comment>
<comment type="subcellular location">
    <subcellularLocation>
        <location evidence="1">Virion</location>
    </subcellularLocation>
    <subcellularLocation>
        <location evidence="1">Host cytoplasm</location>
        <location evidence="1">Host perinuclear region</location>
    </subcellularLocation>
    <subcellularLocation>
        <location evidence="1">Host cell membrane</location>
        <topology evidence="1">Lipid-anchor</topology>
        <orientation evidence="1">Cytoplasmic side</orientation>
    </subcellularLocation>
    <text evidence="1">Mainly perinuclear. During budding, associates at the inner side of the plasma membrane of infected cells.</text>
</comment>
<comment type="domain">
    <text>The RING finger domain is essential for the inhibitory activity of protein Z in transcription and RNA replication.</text>
</comment>
<comment type="domain">
    <text evidence="1">Late-budding domains (L domains) are short sequence motifs essential for viral particle budding. They recruit proteins of the host ESCRT machinery (Endosomal Sorting Complex Required for Transport) or ESCRT-associated proteins.</text>
</comment>
<comment type="PTM">
    <text evidence="1 6 9">Myristoylation is required for the role of RING finger protein Z in assembly and budding (By similarity) (PubMed:15452271, PubMed:39339839).</text>
</comment>
<comment type="miscellaneous">
    <text evidence="9">Inhibition of host myristoylation by the compound DDD85646 leads to proteasomal degradation of protein Z (and not lysosomal), strong inhibition of Z-mediated assembly and budding, and reduced levels of viral replication and transcription (PubMed:39339839).</text>
</comment>
<comment type="similarity">
    <text evidence="1">Belongs to the arenaviridae Z protein family.</text>
</comment>
<keyword id="KW-0002">3D-structure</keyword>
<keyword id="KW-1032">Host cell membrane</keyword>
<keyword id="KW-1035">Host cytoplasm</keyword>
<keyword id="KW-1043">Host membrane</keyword>
<keyword id="KW-0945">Host-virus interaction</keyword>
<keyword id="KW-0449">Lipoprotein</keyword>
<keyword id="KW-0472">Membrane</keyword>
<keyword id="KW-0479">Metal-binding</keyword>
<keyword id="KW-0519">Myristate</keyword>
<keyword id="KW-1185">Reference proteome</keyword>
<keyword id="KW-1198">Viral budding</keyword>
<keyword id="KW-1187">Viral budding via the host ESCRT complexes</keyword>
<keyword id="KW-1188">Viral release from host cell</keyword>
<keyword id="KW-0946">Virion</keyword>
<keyword id="KW-0862">Zinc</keyword>
<keyword id="KW-0863">Zinc-finger</keyword>
<feature type="initiator methionine" description="Removed; by host" evidence="1">
    <location>
        <position position="1"/>
    </location>
</feature>
<feature type="chain" id="PRO_0000079202" description="RING finger protein Z" evidence="1">
    <location>
        <begin position="2"/>
        <end position="90"/>
    </location>
</feature>
<feature type="zinc finger region" description="RING-type; atypical" evidence="1">
    <location>
        <begin position="32"/>
        <end position="68"/>
    </location>
</feature>
<feature type="short sequence motif" description="PPXY motif">
    <location>
        <begin position="85"/>
        <end position="88"/>
    </location>
</feature>
<feature type="lipid moiety-binding region" description="N-myristoyl glycine; by host" evidence="1 6">
    <location>
        <position position="2"/>
    </location>
</feature>
<feature type="mutagenesis site" description="Complete loss of myristoylation. Complete loss of virion budding. Proteasomal degradation of Z protein." evidence="6 9">
    <original>G</original>
    <variation>A</variation>
    <location>
        <position position="2"/>
    </location>
</feature>
<feature type="mutagenesis site" description="Complete loss of inhibitory activity on viral RNA synthesis; when associated with G-35." evidence="3">
    <original>C</original>
    <variation>F</variation>
    <location>
        <position position="32"/>
    </location>
</feature>
<feature type="mutagenesis site" description="Complete loss of inhibitory activity on viral RNA synthesis; when associated with F-32." evidence="3">
    <original>C</original>
    <variation>G</variation>
    <location>
        <position position="35"/>
    </location>
</feature>
<organism>
    <name type="scientific">Lymphocytic choriomeningitis virus (strain Armstrong)</name>
    <name type="common">LCMV</name>
    <dbReference type="NCBI Taxonomy" id="11624"/>
    <lineage>
        <taxon>Viruses</taxon>
        <taxon>Riboviria</taxon>
        <taxon>Orthornavirae</taxon>
        <taxon>Negarnaviricota</taxon>
        <taxon>Polyploviricotina</taxon>
        <taxon>Ellioviricetes</taxon>
        <taxon>Bunyavirales</taxon>
        <taxon>Arenaviridae</taxon>
        <taxon>Mammarenavirus</taxon>
        <taxon>Mammarenavirus choriomeningitidis</taxon>
    </lineage>
</organism>
<accession>P18541</accession>
<accession>Q49K85</accession>
<name>Z_LYCVA</name>
<sequence>MGQGKSREEKGTNSTNRAEILPDTTYLGPLSCKSCWQKFDSLVRCHDHYLCRHCLNLLLSVSDRCPLCKYPLPTRLKISTAPSSPPPYEE</sequence>
<gene>
    <name evidence="1" type="primary">Z</name>
    <name type="ordered locus">Segment L</name>
</gene>